<keyword id="KW-0687">Ribonucleoprotein</keyword>
<keyword id="KW-0689">Ribosomal protein</keyword>
<keyword id="KW-0694">RNA-binding</keyword>
<keyword id="KW-0699">rRNA-binding</keyword>
<sequence>MGRTIENKQKIVTEIKSLLDDSEMAVVLDYKGLTIKEMSDLRSRLQTNNGICKVTKNSLMRKAIDGNSNWTDLESLLTGTNAFVLIKEDVGGAVKAIQSFQKETKKSETKGALFEGRLLSESEIKEIASLPSREVLMAKIAGALNGVATKIAISINEVPSGIARSLKQHSEKSES</sequence>
<protein>
    <recommendedName>
        <fullName evidence="1">Large ribosomal subunit protein uL10</fullName>
    </recommendedName>
    <alternativeName>
        <fullName evidence="2">50S ribosomal protein L10</fullName>
    </alternativeName>
</protein>
<accession>Q7V383</accession>
<reference key="1">
    <citation type="journal article" date="2003" name="Nature">
        <title>Genome divergence in two Prochlorococcus ecotypes reflects oceanic niche differentiation.</title>
        <authorList>
            <person name="Rocap G."/>
            <person name="Larimer F.W."/>
            <person name="Lamerdin J.E."/>
            <person name="Malfatti S."/>
            <person name="Chain P."/>
            <person name="Ahlgren N.A."/>
            <person name="Arellano A."/>
            <person name="Coleman M."/>
            <person name="Hauser L."/>
            <person name="Hess W.R."/>
            <person name="Johnson Z.I."/>
            <person name="Land M.L."/>
            <person name="Lindell D."/>
            <person name="Post A.F."/>
            <person name="Regala W."/>
            <person name="Shah M."/>
            <person name="Shaw S.L."/>
            <person name="Steglich C."/>
            <person name="Sullivan M.B."/>
            <person name="Ting C.S."/>
            <person name="Tolonen A."/>
            <person name="Webb E.A."/>
            <person name="Zinser E.R."/>
            <person name="Chisholm S.W."/>
        </authorList>
    </citation>
    <scope>NUCLEOTIDE SEQUENCE [LARGE SCALE GENOMIC DNA]</scope>
    <source>
        <strain>CCMP1986 / NIES-2087 / MED4</strain>
    </source>
</reference>
<proteinExistence type="inferred from homology"/>
<dbReference type="EMBL" id="BX548174">
    <property type="protein sequence ID" value="CAE18661.1"/>
    <property type="molecule type" value="Genomic_DNA"/>
</dbReference>
<dbReference type="RefSeq" id="WP_011131841.1">
    <property type="nucleotide sequence ID" value="NC_005072.1"/>
</dbReference>
<dbReference type="SMR" id="Q7V383"/>
<dbReference type="STRING" id="59919.PMM0202"/>
<dbReference type="KEGG" id="pmm:PMM0202"/>
<dbReference type="eggNOG" id="COG0244">
    <property type="taxonomic scope" value="Bacteria"/>
</dbReference>
<dbReference type="HOGENOM" id="CLU_092227_1_1_3"/>
<dbReference type="OrthoDB" id="9808307at2"/>
<dbReference type="Proteomes" id="UP000001026">
    <property type="component" value="Chromosome"/>
</dbReference>
<dbReference type="GO" id="GO:1990904">
    <property type="term" value="C:ribonucleoprotein complex"/>
    <property type="evidence" value="ECO:0007669"/>
    <property type="project" value="UniProtKB-KW"/>
</dbReference>
<dbReference type="GO" id="GO:0005840">
    <property type="term" value="C:ribosome"/>
    <property type="evidence" value="ECO:0007669"/>
    <property type="project" value="UniProtKB-KW"/>
</dbReference>
<dbReference type="GO" id="GO:0070180">
    <property type="term" value="F:large ribosomal subunit rRNA binding"/>
    <property type="evidence" value="ECO:0007669"/>
    <property type="project" value="UniProtKB-UniRule"/>
</dbReference>
<dbReference type="GO" id="GO:0006412">
    <property type="term" value="P:translation"/>
    <property type="evidence" value="ECO:0007669"/>
    <property type="project" value="UniProtKB-UniRule"/>
</dbReference>
<dbReference type="CDD" id="cd05797">
    <property type="entry name" value="Ribosomal_L10"/>
    <property type="match status" value="1"/>
</dbReference>
<dbReference type="Gene3D" id="3.30.70.1730">
    <property type="match status" value="1"/>
</dbReference>
<dbReference type="Gene3D" id="6.10.250.290">
    <property type="match status" value="1"/>
</dbReference>
<dbReference type="HAMAP" id="MF_00362">
    <property type="entry name" value="Ribosomal_uL10"/>
    <property type="match status" value="1"/>
</dbReference>
<dbReference type="InterPro" id="IPR001790">
    <property type="entry name" value="Ribosomal_uL10"/>
</dbReference>
<dbReference type="InterPro" id="IPR043141">
    <property type="entry name" value="Ribosomal_uL10-like_sf"/>
</dbReference>
<dbReference type="InterPro" id="IPR022973">
    <property type="entry name" value="Ribosomal_uL10_bac"/>
</dbReference>
<dbReference type="InterPro" id="IPR047865">
    <property type="entry name" value="Ribosomal_uL10_bac_type"/>
</dbReference>
<dbReference type="NCBIfam" id="NF000955">
    <property type="entry name" value="PRK00099.1-1"/>
    <property type="match status" value="1"/>
</dbReference>
<dbReference type="PANTHER" id="PTHR11560">
    <property type="entry name" value="39S RIBOSOMAL PROTEIN L10, MITOCHONDRIAL"/>
    <property type="match status" value="1"/>
</dbReference>
<dbReference type="Pfam" id="PF00466">
    <property type="entry name" value="Ribosomal_L10"/>
    <property type="match status" value="1"/>
</dbReference>
<dbReference type="SUPFAM" id="SSF160369">
    <property type="entry name" value="Ribosomal protein L10-like"/>
    <property type="match status" value="1"/>
</dbReference>
<name>RL10_PROMP</name>
<comment type="function">
    <text evidence="1">Forms part of the ribosomal stalk, playing a central role in the interaction of the ribosome with GTP-bound translation factors.</text>
</comment>
<comment type="subunit">
    <text evidence="1">Part of the ribosomal stalk of the 50S ribosomal subunit. The N-terminus interacts with L11 and the large rRNA to form the base of the stalk. The C-terminus forms an elongated spine to which L12 dimers bind in a sequential fashion forming a multimeric L10(L12)X complex.</text>
</comment>
<comment type="similarity">
    <text evidence="1">Belongs to the universal ribosomal protein uL10 family.</text>
</comment>
<evidence type="ECO:0000255" key="1">
    <source>
        <dbReference type="HAMAP-Rule" id="MF_00362"/>
    </source>
</evidence>
<evidence type="ECO:0000305" key="2"/>
<feature type="chain" id="PRO_0000154688" description="Large ribosomal subunit protein uL10">
    <location>
        <begin position="1"/>
        <end position="175"/>
    </location>
</feature>
<gene>
    <name evidence="1" type="primary">rplJ</name>
    <name evidence="1" type="synonym">rpl10</name>
    <name type="ordered locus">PMM0202</name>
</gene>
<organism>
    <name type="scientific">Prochlorococcus marinus subsp. pastoris (strain CCMP1986 / NIES-2087 / MED4)</name>
    <dbReference type="NCBI Taxonomy" id="59919"/>
    <lineage>
        <taxon>Bacteria</taxon>
        <taxon>Bacillati</taxon>
        <taxon>Cyanobacteriota</taxon>
        <taxon>Cyanophyceae</taxon>
        <taxon>Synechococcales</taxon>
        <taxon>Prochlorococcaceae</taxon>
        <taxon>Prochlorococcus</taxon>
    </lineage>
</organism>